<comment type="function">
    <text evidence="1">Converts alpha-N-acetylneuranimic acid (Neu5Ac) to the beta-anomer, accelerating the equilibrium between the alpha- and beta-anomers. Probably facilitates sialidase-negative bacteria to compete successfully for limited amounts of extracellular Neu5Ac, which is likely taken up in the beta-anomer. In addition, the rapid removal of sialic acid from solution might be advantageous to the bacterium to damp down host responses.</text>
</comment>
<comment type="catalytic activity">
    <reaction evidence="1">
        <text>N-acetyl-alpha-neuraminate = N-acetyl-beta-neuraminate</text>
        <dbReference type="Rhea" id="RHEA:25233"/>
        <dbReference type="ChEBI" id="CHEBI:58705"/>
        <dbReference type="ChEBI" id="CHEBI:58770"/>
        <dbReference type="EC" id="5.1.3.24"/>
    </reaction>
</comment>
<comment type="subunit">
    <text evidence="1">Homodimer.</text>
</comment>
<comment type="subcellular location">
    <subcellularLocation>
        <location evidence="1">Periplasm</location>
    </subcellularLocation>
</comment>
<comment type="similarity">
    <text evidence="1">Belongs to the NanM family.</text>
</comment>
<comment type="sequence caution" evidence="2">
    <conflict type="erroneous initiation">
        <sequence resource="EMBL-CDS" id="ABB68776"/>
    </conflict>
</comment>
<sequence>MNKTITALAIMMASFAANASVLPETPVPFKSGTGAIDNDTVYIGLGSAGTAWYKLDTQAKDKKWTALAAFPGGPRDQATSAFIDGNLYVFGGIGKNREGLTQVFNDVHKYNPKTNSWVKLMSHAPMGMAGHVTFVHNGKAYVTGGVNQNIFNGYFEDLNEAGKDSTAVDKINAYYFDKKAEDYFFNKFLLSFDPSTQQWSYAGESPWYGTAGAAVVNKGDKTWLINGEAKPGLRTDAVFELDFTGNNLKWNKLAPVSSPDGVAGGFAGISNDSLIFAGGAGFKGSRENYQHGKNYAHEGLKKSYSTDIHLWHNGKWDKSGELSQGRAYGVSLPWNNSLLIIGGETAGGKAVTDSVLISVKDNKVTVQN</sequence>
<evidence type="ECO:0000255" key="1">
    <source>
        <dbReference type="HAMAP-Rule" id="MF_01195"/>
    </source>
</evidence>
<evidence type="ECO:0000305" key="2"/>
<reference key="1">
    <citation type="journal article" date="2005" name="Nucleic Acids Res.">
        <title>Genome dynamics and diversity of Shigella species, the etiologic agents of bacillary dysentery.</title>
        <authorList>
            <person name="Yang F."/>
            <person name="Yang J."/>
            <person name="Zhang X."/>
            <person name="Chen L."/>
            <person name="Jiang Y."/>
            <person name="Yan Y."/>
            <person name="Tang X."/>
            <person name="Wang J."/>
            <person name="Xiong Z."/>
            <person name="Dong J."/>
            <person name="Xue Y."/>
            <person name="Zhu Y."/>
            <person name="Xu X."/>
            <person name="Sun L."/>
            <person name="Chen S."/>
            <person name="Nie H."/>
            <person name="Peng J."/>
            <person name="Xu J."/>
            <person name="Wang Y."/>
            <person name="Yuan Z."/>
            <person name="Wen Y."/>
            <person name="Yao Z."/>
            <person name="Shen Y."/>
            <person name="Qiang B."/>
            <person name="Hou Y."/>
            <person name="Yu J."/>
            <person name="Jin Q."/>
        </authorList>
    </citation>
    <scope>NUCLEOTIDE SEQUENCE [LARGE SCALE GENOMIC DNA]</scope>
    <source>
        <strain>Sb227</strain>
    </source>
</reference>
<proteinExistence type="inferred from homology"/>
<dbReference type="EC" id="5.1.3.24" evidence="1"/>
<dbReference type="EMBL" id="CP000036">
    <property type="protein sequence ID" value="ABB68776.1"/>
    <property type="status" value="ALT_INIT"/>
    <property type="molecule type" value="Genomic_DNA"/>
</dbReference>
<dbReference type="RefSeq" id="WP_004988667.1">
    <property type="nucleotide sequence ID" value="NC_007613.1"/>
</dbReference>
<dbReference type="SMR" id="Q31T32"/>
<dbReference type="KEGG" id="sbo:SBO_4360"/>
<dbReference type="HOGENOM" id="CLU_061535_0_0_6"/>
<dbReference type="Proteomes" id="UP000007067">
    <property type="component" value="Chromosome"/>
</dbReference>
<dbReference type="GO" id="GO:0042597">
    <property type="term" value="C:periplasmic space"/>
    <property type="evidence" value="ECO:0007669"/>
    <property type="project" value="UniProtKB-SubCell"/>
</dbReference>
<dbReference type="GO" id="GO:0016857">
    <property type="term" value="F:racemase and epimerase activity, acting on carbohydrates and derivatives"/>
    <property type="evidence" value="ECO:0007669"/>
    <property type="project" value="UniProtKB-UniRule"/>
</dbReference>
<dbReference type="FunFam" id="2.120.10.80:FF:000061">
    <property type="entry name" value="N-acetylneuraminate epimerase"/>
    <property type="match status" value="1"/>
</dbReference>
<dbReference type="FunFam" id="2.120.10.80:FF:000067">
    <property type="entry name" value="N-acetylneuraminate epimerase"/>
    <property type="match status" value="1"/>
</dbReference>
<dbReference type="Gene3D" id="2.120.10.80">
    <property type="entry name" value="Kelch-type beta propeller"/>
    <property type="match status" value="2"/>
</dbReference>
<dbReference type="HAMAP" id="MF_01195">
    <property type="entry name" value="NanM"/>
    <property type="match status" value="1"/>
</dbReference>
<dbReference type="InterPro" id="IPR015915">
    <property type="entry name" value="Kelch-typ_b-propeller"/>
</dbReference>
<dbReference type="InterPro" id="IPR056734">
    <property type="entry name" value="NANM"/>
</dbReference>
<dbReference type="InterPro" id="IPR019936">
    <property type="entry name" value="NanM_proteobact"/>
</dbReference>
<dbReference type="NCBIfam" id="TIGR03547">
    <property type="entry name" value="muta_rot_YjhT"/>
    <property type="match status" value="1"/>
</dbReference>
<dbReference type="NCBIfam" id="NF010730">
    <property type="entry name" value="PRK14131.1"/>
    <property type="match status" value="1"/>
</dbReference>
<dbReference type="PANTHER" id="PTHR45632">
    <property type="entry name" value="LD33804P"/>
    <property type="match status" value="1"/>
</dbReference>
<dbReference type="Pfam" id="PF24996">
    <property type="entry name" value="NANM"/>
    <property type="match status" value="1"/>
</dbReference>
<dbReference type="SUPFAM" id="SSF117281">
    <property type="entry name" value="Kelch motif"/>
    <property type="match status" value="1"/>
</dbReference>
<protein>
    <recommendedName>
        <fullName evidence="1">N-acetylneuraminate epimerase</fullName>
        <ecNumber evidence="1">5.1.3.24</ecNumber>
    </recommendedName>
    <alternativeName>
        <fullName evidence="1">N-acetylneuraminate mutarotase</fullName>
        <shortName evidence="1">Neu5Ac mutarotase</shortName>
    </alternativeName>
    <alternativeName>
        <fullName evidence="1">Sialic acid epimerase</fullName>
    </alternativeName>
</protein>
<name>NANM_SHIBS</name>
<organism>
    <name type="scientific">Shigella boydii serotype 4 (strain Sb227)</name>
    <dbReference type="NCBI Taxonomy" id="300268"/>
    <lineage>
        <taxon>Bacteria</taxon>
        <taxon>Pseudomonadati</taxon>
        <taxon>Pseudomonadota</taxon>
        <taxon>Gammaproteobacteria</taxon>
        <taxon>Enterobacterales</taxon>
        <taxon>Enterobacteriaceae</taxon>
        <taxon>Shigella</taxon>
    </lineage>
</organism>
<gene>
    <name evidence="1" type="primary">nanM</name>
    <name type="ordered locus">SBO_4360</name>
</gene>
<feature type="signal peptide" evidence="1">
    <location>
        <begin position="1"/>
        <end position="19"/>
    </location>
</feature>
<feature type="chain" id="PRO_0000333069" description="N-acetylneuraminate epimerase">
    <location>
        <begin position="20"/>
        <end position="368"/>
    </location>
</feature>
<feature type="repeat" description="Kelch 1">
    <location>
        <begin position="40"/>
        <end position="84"/>
    </location>
</feature>
<feature type="repeat" description="Kelch 2">
    <location>
        <begin position="86"/>
        <end position="137"/>
    </location>
</feature>
<feature type="repeat" description="Kelch 3">
    <location>
        <begin position="139"/>
        <end position="173"/>
    </location>
</feature>
<feature type="repeat" description="Kelch 4">
    <location>
        <begin position="174"/>
        <end position="219"/>
    </location>
</feature>
<feature type="repeat" description="Kelch 5">
    <location>
        <begin position="222"/>
        <end position="265"/>
    </location>
</feature>
<feature type="repeat" description="Kelch 6">
    <location>
        <begin position="287"/>
        <end position="336"/>
    </location>
</feature>
<feature type="repeat" description="Kelch 7">
    <location>
        <begin position="338"/>
        <end position="367"/>
    </location>
</feature>
<feature type="active site" description="Proton acceptor" evidence="1">
    <location>
        <position position="228"/>
    </location>
</feature>
<accession>Q31T32</accession>
<keyword id="KW-0119">Carbohydrate metabolism</keyword>
<keyword id="KW-0413">Isomerase</keyword>
<keyword id="KW-0880">Kelch repeat</keyword>
<keyword id="KW-0574">Periplasm</keyword>
<keyword id="KW-0677">Repeat</keyword>
<keyword id="KW-0732">Signal</keyword>